<name>DEST_RAT</name>
<dbReference type="EMBL" id="CF111187">
    <property type="status" value="NOT_ANNOTATED_CDS"/>
    <property type="molecule type" value="mRNA"/>
</dbReference>
<dbReference type="PIR" id="JE0223">
    <property type="entry name" value="JE0223"/>
</dbReference>
<dbReference type="RefSeq" id="NP_001028838.1">
    <property type="nucleotide sequence ID" value="NM_001033666.1"/>
</dbReference>
<dbReference type="SMR" id="Q7M0E3"/>
<dbReference type="FunCoup" id="Q7M0E3">
    <property type="interactions" value="2022"/>
</dbReference>
<dbReference type="IntAct" id="Q7M0E3">
    <property type="interactions" value="1"/>
</dbReference>
<dbReference type="STRING" id="10116.ENSRNOP00000007794"/>
<dbReference type="GlyGen" id="Q7M0E3">
    <property type="glycosylation" value="1 site, 1 O-linked glycan (1 site)"/>
</dbReference>
<dbReference type="iPTMnet" id="Q7M0E3"/>
<dbReference type="PhosphoSitePlus" id="Q7M0E3"/>
<dbReference type="SwissPalm" id="Q7M0E3"/>
<dbReference type="jPOST" id="Q7M0E3"/>
<dbReference type="PaxDb" id="10116-ENSRNOP00000007794"/>
<dbReference type="Ensembl" id="ENSRNOT00000007794.7">
    <property type="protein sequence ID" value="ENSRNOP00000007794.5"/>
    <property type="gene ID" value="ENSRNOG00000005924.7"/>
</dbReference>
<dbReference type="GeneID" id="502674"/>
<dbReference type="KEGG" id="rno:502674"/>
<dbReference type="UCSC" id="RGD:1588366">
    <property type="organism name" value="rat"/>
</dbReference>
<dbReference type="AGR" id="RGD:1588366"/>
<dbReference type="CTD" id="11034"/>
<dbReference type="RGD" id="1588366">
    <property type="gene designation" value="Dstn"/>
</dbReference>
<dbReference type="eggNOG" id="KOG1735">
    <property type="taxonomic scope" value="Eukaryota"/>
</dbReference>
<dbReference type="GeneTree" id="ENSGT00950000183000"/>
<dbReference type="HOGENOM" id="CLU_094004_0_0_1"/>
<dbReference type="InParanoid" id="Q7M0E3"/>
<dbReference type="OMA" id="ITFYSWS"/>
<dbReference type="OrthoDB" id="10249245at2759"/>
<dbReference type="PhylomeDB" id="Q7M0E3"/>
<dbReference type="TreeFam" id="TF328601"/>
<dbReference type="PRO" id="PR:Q7M0E3"/>
<dbReference type="Proteomes" id="UP000002494">
    <property type="component" value="Chromosome 3"/>
</dbReference>
<dbReference type="Bgee" id="ENSRNOG00000005924">
    <property type="expression patterns" value="Expressed in jejunum and 19 other cell types or tissues"/>
</dbReference>
<dbReference type="GO" id="GO:0015629">
    <property type="term" value="C:actin cytoskeleton"/>
    <property type="evidence" value="ECO:0000318"/>
    <property type="project" value="GO_Central"/>
</dbReference>
<dbReference type="GO" id="GO:0030864">
    <property type="term" value="C:cortical actin cytoskeleton"/>
    <property type="evidence" value="ECO:0000266"/>
    <property type="project" value="RGD"/>
</dbReference>
<dbReference type="GO" id="GO:0005737">
    <property type="term" value="C:cytoplasm"/>
    <property type="evidence" value="ECO:0000266"/>
    <property type="project" value="RGD"/>
</dbReference>
<dbReference type="GO" id="GO:0098978">
    <property type="term" value="C:glutamatergic synapse"/>
    <property type="evidence" value="ECO:0000266"/>
    <property type="project" value="RGD"/>
</dbReference>
<dbReference type="GO" id="GO:0098794">
    <property type="term" value="C:postsynapse"/>
    <property type="evidence" value="ECO:0000266"/>
    <property type="project" value="RGD"/>
</dbReference>
<dbReference type="GO" id="GO:0098793">
    <property type="term" value="C:presynapse"/>
    <property type="evidence" value="ECO:0000266"/>
    <property type="project" value="RGD"/>
</dbReference>
<dbReference type="GO" id="GO:0051015">
    <property type="term" value="F:actin filament binding"/>
    <property type="evidence" value="ECO:0000250"/>
    <property type="project" value="UniProtKB"/>
</dbReference>
<dbReference type="GO" id="GO:0030042">
    <property type="term" value="P:actin filament depolymerization"/>
    <property type="evidence" value="ECO:0000266"/>
    <property type="project" value="RGD"/>
</dbReference>
<dbReference type="GO" id="GO:0030043">
    <property type="term" value="P:actin filament fragmentation"/>
    <property type="evidence" value="ECO:0000266"/>
    <property type="project" value="RGD"/>
</dbReference>
<dbReference type="GO" id="GO:0051014">
    <property type="term" value="P:actin filament severing"/>
    <property type="evidence" value="ECO:0000318"/>
    <property type="project" value="GO_Central"/>
</dbReference>
<dbReference type="GO" id="GO:0048870">
    <property type="term" value="P:cell motility"/>
    <property type="evidence" value="ECO:0000266"/>
    <property type="project" value="RGD"/>
</dbReference>
<dbReference type="GO" id="GO:0030836">
    <property type="term" value="P:positive regulation of actin filament depolymerization"/>
    <property type="evidence" value="ECO:0000266"/>
    <property type="project" value="RGD"/>
</dbReference>
<dbReference type="CDD" id="cd11286">
    <property type="entry name" value="ADF_cofilin_like"/>
    <property type="match status" value="1"/>
</dbReference>
<dbReference type="FunFam" id="3.40.20.10:FF:000010">
    <property type="entry name" value="Putative destrin"/>
    <property type="match status" value="1"/>
</dbReference>
<dbReference type="Gene3D" id="3.40.20.10">
    <property type="entry name" value="Severin"/>
    <property type="match status" value="1"/>
</dbReference>
<dbReference type="InterPro" id="IPR002108">
    <property type="entry name" value="ADF-H"/>
</dbReference>
<dbReference type="InterPro" id="IPR029006">
    <property type="entry name" value="ADF-H/Gelsolin-like_dom_sf"/>
</dbReference>
<dbReference type="InterPro" id="IPR017904">
    <property type="entry name" value="ADF/Cofilin"/>
</dbReference>
<dbReference type="PANTHER" id="PTHR11913">
    <property type="entry name" value="COFILIN-RELATED"/>
    <property type="match status" value="1"/>
</dbReference>
<dbReference type="Pfam" id="PF00241">
    <property type="entry name" value="Cofilin_ADF"/>
    <property type="match status" value="1"/>
</dbReference>
<dbReference type="PRINTS" id="PR00006">
    <property type="entry name" value="COFILIN"/>
</dbReference>
<dbReference type="SMART" id="SM00102">
    <property type="entry name" value="ADF"/>
    <property type="match status" value="1"/>
</dbReference>
<dbReference type="SUPFAM" id="SSF55753">
    <property type="entry name" value="Actin depolymerizing proteins"/>
    <property type="match status" value="1"/>
</dbReference>
<dbReference type="PROSITE" id="PS51263">
    <property type="entry name" value="ADF_H"/>
    <property type="match status" value="1"/>
</dbReference>
<sequence>MASGVQVADEVCRIFYDMKVRKCSTPEEIKKRKKAVIFCLSADKKCIVVEEGKEILVGDVGVTITDPFKHFVGMLPEKDCRYALYDASFETKESRKEELMFFLWAPEQAPLKSKMIYASSKDAIKKKFPGIKHEYQANGPEDLNRTSIAEKLGGSLIVAFEGSPV</sequence>
<proteinExistence type="evidence at protein level"/>
<organism>
    <name type="scientific">Rattus norvegicus</name>
    <name type="common">Rat</name>
    <dbReference type="NCBI Taxonomy" id="10116"/>
    <lineage>
        <taxon>Eukaryota</taxon>
        <taxon>Metazoa</taxon>
        <taxon>Chordata</taxon>
        <taxon>Craniata</taxon>
        <taxon>Vertebrata</taxon>
        <taxon>Euteleostomi</taxon>
        <taxon>Mammalia</taxon>
        <taxon>Eutheria</taxon>
        <taxon>Euarchontoglires</taxon>
        <taxon>Glires</taxon>
        <taxon>Rodentia</taxon>
        <taxon>Myomorpha</taxon>
        <taxon>Muroidea</taxon>
        <taxon>Muridae</taxon>
        <taxon>Murinae</taxon>
        <taxon>Rattus</taxon>
    </lineage>
</organism>
<keyword id="KW-0007">Acetylation</keyword>
<keyword id="KW-0009">Actin-binding</keyword>
<keyword id="KW-0903">Direct protein sequencing</keyword>
<keyword id="KW-0597">Phosphoprotein</keyword>
<keyword id="KW-1185">Reference proteome</keyword>
<keyword id="KW-0832">Ubl conjugation</keyword>
<evidence type="ECO:0000250" key="1">
    <source>
        <dbReference type="UniProtKB" id="P60981"/>
    </source>
</evidence>
<evidence type="ECO:0000250" key="2">
    <source>
        <dbReference type="UniProtKB" id="Q9R0P5"/>
    </source>
</evidence>
<evidence type="ECO:0000255" key="3"/>
<evidence type="ECO:0000255" key="4">
    <source>
        <dbReference type="PROSITE-ProRule" id="PRU00599"/>
    </source>
</evidence>
<evidence type="ECO:0000269" key="5">
    <source>
    </source>
</evidence>
<evidence type="ECO:0000269" key="6">
    <source ref="4"/>
</evidence>
<evidence type="ECO:0000305" key="7"/>
<evidence type="ECO:0007744" key="8">
    <source>
    </source>
</evidence>
<gene>
    <name type="primary">Dstn</name>
</gene>
<reference key="1">
    <citation type="journal article" date="2004" name="Am. J. Respir. Cell Mol. Biol.">
        <title>Gene expression analysis in response to lung toxicants: I. Sequencing and microarray development.</title>
        <authorList>
            <person name="Shultz M.A."/>
            <person name="Zhang L."/>
            <person name="Gu Y.-Z."/>
            <person name="Baker G.L."/>
            <person name="Fannuchi M.V."/>
            <person name="Padua A.M."/>
            <person name="Gurske W.A."/>
            <person name="Morin D."/>
            <person name="Penn S.G."/>
            <person name="Jovanovich S.B."/>
            <person name="Plopper C.G."/>
            <person name="Buckpitt A.R."/>
        </authorList>
    </citation>
    <scope>NUCLEOTIDE SEQUENCE [MRNA]</scope>
    <source>
        <strain>Sprague-Dawley</strain>
        <tissue>Lung</tissue>
    </source>
</reference>
<reference key="2">
    <citation type="journal article" date="1998" name="Arch. Oral Biol.">
        <title>Complete amino acid sequences and phosphorylation sites, determined by Edman degradation and mass spectrometry, of rat parotid destrin- and cofilin-like proteins.</title>
        <authorList>
            <person name="Kanamori T."/>
            <person name="Suzuki M."/>
            <person name="Titani K."/>
        </authorList>
    </citation>
    <scope>PROTEIN SEQUENCE OF 2-165</scope>
    <scope>ACETYLATION AT ALA-2</scope>
    <scope>PHOSPHORYLATION AT SER-3</scope>
    <scope>IDENTIFICATION BY MASS SPECTROMETRY</scope>
    <source>
        <tissue>Parotid gland</tissue>
    </source>
</reference>
<reference key="3">
    <citation type="submission" date="2007-07" db="UniProtKB">
        <authorList>
            <person name="Lubec G."/>
            <person name="Afjehi-Sadat L."/>
            <person name="Diao W."/>
            <person name="Kang S.U."/>
        </authorList>
    </citation>
    <scope>PROTEIN SEQUENCE OF 46-69; 82-92 AND 133-145</scope>
    <scope>IDENTIFICATION BY MASS SPECTROMETRY</scope>
    <source>
        <strain>Sprague-Dawley</strain>
        <tissue>Brain</tissue>
        <tissue>Hippocampus</tissue>
        <tissue>Spinal cord</tissue>
    </source>
</reference>
<reference key="4">
    <citation type="submission" date="2007-02" db="UniProtKB">
        <authorList>
            <person name="Lubec G."/>
            <person name="Chen W.-Q."/>
        </authorList>
    </citation>
    <scope>ACETYLATION AT ALA-2</scope>
    <scope>IDENTIFICATION BY MASS SPECTROMETRY</scope>
</reference>
<reference key="5">
    <citation type="journal article" date="2012" name="Nat. Commun.">
        <title>Quantitative maps of protein phosphorylation sites across 14 different rat organs and tissues.</title>
        <authorList>
            <person name="Lundby A."/>
            <person name="Secher A."/>
            <person name="Lage K."/>
            <person name="Nordsborg N.B."/>
            <person name="Dmytriyev A."/>
            <person name="Lundby C."/>
            <person name="Olsen J.V."/>
        </authorList>
    </citation>
    <scope>PHOSPHORYLATION [LARGE SCALE ANALYSIS] AT SER-3</scope>
    <scope>IDENTIFICATION BY MASS SPECTROMETRY [LARGE SCALE ANALYSIS]</scope>
</reference>
<accession>Q7M0E3</accession>
<feature type="initiator methionine" description="Removed" evidence="5 6">
    <location>
        <position position="1"/>
    </location>
</feature>
<feature type="chain" id="PRO_0000214921" description="Destrin">
    <location>
        <begin position="2"/>
        <end position="165"/>
    </location>
</feature>
<feature type="domain" description="ADF-H" evidence="4">
    <location>
        <begin position="4"/>
        <end position="153"/>
    </location>
</feature>
<feature type="short sequence motif" description="Nuclear localization signal" evidence="3">
    <location>
        <begin position="30"/>
        <end position="34"/>
    </location>
</feature>
<feature type="modified residue" description="N-acetylalanine" evidence="5 6">
    <location>
        <position position="2"/>
    </location>
</feature>
<feature type="modified residue" description="Phosphoserine" evidence="5 8">
    <location>
        <position position="3"/>
    </location>
</feature>
<feature type="modified residue" description="N6-acetyllysine" evidence="1">
    <location>
        <position position="19"/>
    </location>
</feature>
<feature type="sequence conflict" description="In Ref. 2; AA sequence." evidence="7" ref="2">
    <original>K</original>
    <variation>L</variation>
    <location>
        <position position="114"/>
    </location>
</feature>
<protein>
    <recommendedName>
        <fullName>Destrin</fullName>
    </recommendedName>
    <alternativeName>
        <fullName>Actin-depolymerizing factor</fullName>
        <shortName>ADF</shortName>
    </alternativeName>
</protein>
<comment type="function">
    <text evidence="1 2">Actin-depolymerizing protein. Severs actin filaments (F-actin) and binds to actin monomers (G-actin). Acts in a pH-independent manner.</text>
</comment>
<comment type="PTM">
    <text evidence="1">ISGylated.</text>
</comment>
<comment type="similarity">
    <text evidence="7">Belongs to the actin-binding proteins ADF family.</text>
</comment>